<organism>
    <name type="scientific">Zymomonas mobilis subsp. mobilis (strain ATCC 31821 / ZM4 / CP4)</name>
    <dbReference type="NCBI Taxonomy" id="264203"/>
    <lineage>
        <taxon>Bacteria</taxon>
        <taxon>Pseudomonadati</taxon>
        <taxon>Pseudomonadota</taxon>
        <taxon>Alphaproteobacteria</taxon>
        <taxon>Sphingomonadales</taxon>
        <taxon>Zymomonadaceae</taxon>
        <taxon>Zymomonas</taxon>
    </lineage>
</organism>
<evidence type="ECO:0000255" key="1">
    <source>
        <dbReference type="HAMAP-Rule" id="MF_00008"/>
    </source>
</evidence>
<evidence type="ECO:0000305" key="2"/>
<gene>
    <name evidence="1" type="primary">thyA</name>
    <name type="synonym">thyB</name>
    <name type="ordered locus">ZMO1755</name>
</gene>
<reference key="1">
    <citation type="submission" date="1998-10" db="EMBL/GenBank/DDBJ databases">
        <authorList>
            <person name="Um H.W."/>
            <person name="Kang H.S."/>
        </authorList>
    </citation>
    <scope>NUCLEOTIDE SEQUENCE [GENOMIC DNA]</scope>
    <source>
        <strain>ATCC 31821 / ZM4 / CP4</strain>
    </source>
</reference>
<reference key="2">
    <citation type="journal article" date="2005" name="Nat. Biotechnol.">
        <title>The genome sequence of the ethanologenic bacterium Zymomonas mobilis ZM4.</title>
        <authorList>
            <person name="Seo J.-S."/>
            <person name="Chong H."/>
            <person name="Park H.S."/>
            <person name="Yoon K.-O."/>
            <person name="Jung C."/>
            <person name="Kim J.J."/>
            <person name="Hong J.H."/>
            <person name="Kim H."/>
            <person name="Kim J.-H."/>
            <person name="Kil J.-I."/>
            <person name="Park C.J."/>
            <person name="Oh H.-M."/>
            <person name="Lee J.-S."/>
            <person name="Jin S.-J."/>
            <person name="Um H.-W."/>
            <person name="Lee H.-J."/>
            <person name="Oh S.-J."/>
            <person name="Kim J.Y."/>
            <person name="Kang H.L."/>
            <person name="Lee S.Y."/>
            <person name="Lee K.J."/>
            <person name="Kang H.S."/>
        </authorList>
    </citation>
    <scope>NUCLEOTIDE SEQUENCE [LARGE SCALE GENOMIC DNA]</scope>
    <source>
        <strain>ATCC 31821 / ZM4 / CP4</strain>
    </source>
</reference>
<reference key="3">
    <citation type="journal article" date="2009" name="Nat. Biotechnol.">
        <title>Improved genome annotation for Zymomonas mobilis.</title>
        <authorList>
            <person name="Yang S."/>
            <person name="Pappas K.M."/>
            <person name="Hauser L.J."/>
            <person name="Land M.L."/>
            <person name="Chen G.L."/>
            <person name="Hurst G.B."/>
            <person name="Pan C."/>
            <person name="Kouvelis V.N."/>
            <person name="Typas M.A."/>
            <person name="Pelletier D.A."/>
            <person name="Klingeman D.M."/>
            <person name="Chang Y.J."/>
            <person name="Samatova N.F."/>
            <person name="Brown S.D."/>
        </authorList>
    </citation>
    <scope>SEQUENCE REVISION</scope>
</reference>
<protein>
    <recommendedName>
        <fullName evidence="1">Thymidylate synthase</fullName>
        <shortName evidence="1">TS</shortName>
        <shortName evidence="1">TSase</shortName>
        <ecNumber evidence="1">2.1.1.45</ecNumber>
    </recommendedName>
</protein>
<comment type="function">
    <text evidence="1">Catalyzes the reductive methylation of 2'-deoxyuridine-5'-monophosphate (dUMP) to 2'-deoxythymidine-5'-monophosphate (dTMP) while utilizing 5,10-methylenetetrahydrofolate (mTHF) as the methyl donor and reductant in the reaction, yielding dihydrofolate (DHF) as a by-product. This enzymatic reaction provides an intracellular de novo source of dTMP, an essential precursor for DNA biosynthesis.</text>
</comment>
<comment type="catalytic activity">
    <reaction evidence="1">
        <text>dUMP + (6R)-5,10-methylene-5,6,7,8-tetrahydrofolate = 7,8-dihydrofolate + dTMP</text>
        <dbReference type="Rhea" id="RHEA:12104"/>
        <dbReference type="ChEBI" id="CHEBI:15636"/>
        <dbReference type="ChEBI" id="CHEBI:57451"/>
        <dbReference type="ChEBI" id="CHEBI:63528"/>
        <dbReference type="ChEBI" id="CHEBI:246422"/>
        <dbReference type="EC" id="2.1.1.45"/>
    </reaction>
</comment>
<comment type="pathway">
    <text evidence="1">Pyrimidine metabolism; dTTP biosynthesis.</text>
</comment>
<comment type="subunit">
    <text evidence="1">Homodimer.</text>
</comment>
<comment type="subcellular location">
    <subcellularLocation>
        <location evidence="1">Cytoplasm</location>
    </subcellularLocation>
</comment>
<comment type="similarity">
    <text evidence="1">Belongs to the thymidylate synthase family. Bacterial-type ThyA subfamily.</text>
</comment>
<comment type="sequence caution" evidence="2">
    <conflict type="erroneous initiation">
        <sequence resource="EMBL-CDS" id="AAD19406"/>
    </conflict>
</comment>
<keyword id="KW-0963">Cytoplasm</keyword>
<keyword id="KW-0489">Methyltransferase</keyword>
<keyword id="KW-0545">Nucleotide biosynthesis</keyword>
<keyword id="KW-1185">Reference proteome</keyword>
<keyword id="KW-0808">Transferase</keyword>
<proteinExistence type="inferred from homology"/>
<feature type="chain" id="PRO_0000141053" description="Thymidylate synthase">
    <location>
        <begin position="1"/>
        <end position="296"/>
    </location>
</feature>
<feature type="active site" description="Nucleophile" evidence="1">
    <location>
        <position position="177"/>
    </location>
</feature>
<feature type="binding site" description="in other chain" evidence="1">
    <location>
        <position position="23"/>
    </location>
    <ligand>
        <name>dUMP</name>
        <dbReference type="ChEBI" id="CHEBI:246422"/>
        <note>ligand shared between dimeric partners</note>
    </ligand>
</feature>
<feature type="binding site" evidence="1">
    <location>
        <begin position="157"/>
        <end position="158"/>
    </location>
    <ligand>
        <name>dUMP</name>
        <dbReference type="ChEBI" id="CHEBI:246422"/>
        <note>ligand shared between dimeric partners</note>
    </ligand>
</feature>
<feature type="binding site" description="in other chain" evidence="1">
    <location>
        <begin position="198"/>
        <end position="201"/>
    </location>
    <ligand>
        <name>dUMP</name>
        <dbReference type="ChEBI" id="CHEBI:246422"/>
        <note>ligand shared between dimeric partners</note>
    </ligand>
</feature>
<feature type="binding site" evidence="1">
    <location>
        <position position="201"/>
    </location>
    <ligand>
        <name>(6R)-5,10-methylene-5,6,7,8-tetrahydrofolate</name>
        <dbReference type="ChEBI" id="CHEBI:15636"/>
    </ligand>
</feature>
<feature type="binding site" description="in other chain" evidence="1">
    <location>
        <position position="209"/>
    </location>
    <ligand>
        <name>dUMP</name>
        <dbReference type="ChEBI" id="CHEBI:246422"/>
        <note>ligand shared between dimeric partners</note>
    </ligand>
</feature>
<feature type="binding site" description="in other chain" evidence="1">
    <location>
        <begin position="239"/>
        <end position="241"/>
    </location>
    <ligand>
        <name>dUMP</name>
        <dbReference type="ChEBI" id="CHEBI:246422"/>
        <note>ligand shared between dimeric partners</note>
    </ligand>
</feature>
<feature type="binding site" evidence="1">
    <location>
        <position position="295"/>
    </location>
    <ligand>
        <name>(6R)-5,10-methylene-5,6,7,8-tetrahydrofolate</name>
        <dbReference type="ChEBI" id="CHEBI:15636"/>
    </ligand>
</feature>
<feature type="sequence conflict" description="In Ref. 1; AAD19406." evidence="2" ref="1">
    <original>LPFNLVGAAA</original>
    <variation>AAFQFGRRGR</variation>
    <location>
        <begin position="206"/>
        <end position="215"/>
    </location>
</feature>
<feature type="sequence conflict" description="In Ref. 1; AAD19406." evidence="2" ref="1">
    <original>EQLAREPRAFP</original>
    <variation>NSLPVTSGFS</variation>
    <location>
        <begin position="250"/>
        <end position="260"/>
    </location>
</feature>
<feature type="sequence conflict" description="In Ref. 1; AAD19406." evidence="2" ref="1">
    <original>IEDFAITGYDPH</original>
    <variation>SRILRLQDMILI</variation>
    <location>
        <begin position="276"/>
        <end position="287"/>
    </location>
</feature>
<name>TYSY_ZYMMO</name>
<dbReference type="EC" id="2.1.1.45" evidence="1"/>
<dbReference type="EMBL" id="AF102543">
    <property type="protein sequence ID" value="AAD19406.1"/>
    <property type="status" value="ALT_INIT"/>
    <property type="molecule type" value="Genomic_DNA"/>
</dbReference>
<dbReference type="EMBL" id="AE008692">
    <property type="protein sequence ID" value="AAV90379.2"/>
    <property type="molecule type" value="Genomic_DNA"/>
</dbReference>
<dbReference type="RefSeq" id="WP_011241496.1">
    <property type="nucleotide sequence ID" value="NZ_CP035711.1"/>
</dbReference>
<dbReference type="SMR" id="Q9Z671"/>
<dbReference type="STRING" id="264203.ZMO1755"/>
<dbReference type="KEGG" id="zmo:ZMO1755"/>
<dbReference type="eggNOG" id="COG0207">
    <property type="taxonomic scope" value="Bacteria"/>
</dbReference>
<dbReference type="HOGENOM" id="CLU_021669_0_0_5"/>
<dbReference type="UniPathway" id="UPA00575"/>
<dbReference type="Proteomes" id="UP000001173">
    <property type="component" value="Chromosome"/>
</dbReference>
<dbReference type="GO" id="GO:0005829">
    <property type="term" value="C:cytosol"/>
    <property type="evidence" value="ECO:0007669"/>
    <property type="project" value="TreeGrafter"/>
</dbReference>
<dbReference type="GO" id="GO:0004799">
    <property type="term" value="F:thymidylate synthase activity"/>
    <property type="evidence" value="ECO:0007669"/>
    <property type="project" value="UniProtKB-UniRule"/>
</dbReference>
<dbReference type="GO" id="GO:0006231">
    <property type="term" value="P:dTMP biosynthetic process"/>
    <property type="evidence" value="ECO:0007669"/>
    <property type="project" value="UniProtKB-UniRule"/>
</dbReference>
<dbReference type="GO" id="GO:0006235">
    <property type="term" value="P:dTTP biosynthetic process"/>
    <property type="evidence" value="ECO:0007669"/>
    <property type="project" value="UniProtKB-UniRule"/>
</dbReference>
<dbReference type="GO" id="GO:0032259">
    <property type="term" value="P:methylation"/>
    <property type="evidence" value="ECO:0007669"/>
    <property type="project" value="UniProtKB-KW"/>
</dbReference>
<dbReference type="CDD" id="cd00351">
    <property type="entry name" value="TS_Pyrimidine_HMase"/>
    <property type="match status" value="1"/>
</dbReference>
<dbReference type="Gene3D" id="3.30.572.10">
    <property type="entry name" value="Thymidylate synthase/dCMP hydroxymethylase domain"/>
    <property type="match status" value="1"/>
</dbReference>
<dbReference type="HAMAP" id="MF_00008">
    <property type="entry name" value="Thymidy_synth_bact"/>
    <property type="match status" value="1"/>
</dbReference>
<dbReference type="InterPro" id="IPR045097">
    <property type="entry name" value="Thymidate_synth/dCMP_Mease"/>
</dbReference>
<dbReference type="InterPro" id="IPR023451">
    <property type="entry name" value="Thymidate_synth/dCMP_Mease_dom"/>
</dbReference>
<dbReference type="InterPro" id="IPR036926">
    <property type="entry name" value="Thymidate_synth/dCMP_Mease_sf"/>
</dbReference>
<dbReference type="InterPro" id="IPR000398">
    <property type="entry name" value="Thymidylate_synthase"/>
</dbReference>
<dbReference type="InterPro" id="IPR020940">
    <property type="entry name" value="Thymidylate_synthase_AS"/>
</dbReference>
<dbReference type="NCBIfam" id="NF002497">
    <property type="entry name" value="PRK01827.1-3"/>
    <property type="match status" value="1"/>
</dbReference>
<dbReference type="NCBIfam" id="TIGR03284">
    <property type="entry name" value="thym_sym"/>
    <property type="match status" value="1"/>
</dbReference>
<dbReference type="PANTHER" id="PTHR11548">
    <property type="entry name" value="THYMIDYLATE SYNTHASE 1"/>
    <property type="match status" value="1"/>
</dbReference>
<dbReference type="PANTHER" id="PTHR11548:SF1">
    <property type="entry name" value="THYMIDYLATE SYNTHASE 1"/>
    <property type="match status" value="1"/>
</dbReference>
<dbReference type="Pfam" id="PF00303">
    <property type="entry name" value="Thymidylat_synt"/>
    <property type="match status" value="1"/>
</dbReference>
<dbReference type="PRINTS" id="PR00108">
    <property type="entry name" value="THYMDSNTHASE"/>
</dbReference>
<dbReference type="SUPFAM" id="SSF55831">
    <property type="entry name" value="Thymidylate synthase/dCMP hydroxymethylase"/>
    <property type="match status" value="1"/>
</dbReference>
<dbReference type="PROSITE" id="PS00091">
    <property type="entry name" value="THYMIDYLATE_SYNTHASE"/>
    <property type="match status" value="1"/>
</dbReference>
<sequence length="296" mass="33586">MSEHQYLRLVSDILEKGDQRHDRTGVGTLSLFGAMMRFDLSKGRIPILTTKKVSYRLAIREMLWFLSGDTNIRPLVEQGVSIWSDWPLARYQAETGALLSKKEFEAKILADTEFAKKWGDLGPVYGRQWRRWQGSDGQVYDQIATLIETLKSNPSSRRMLFHGWNVAELKDMALPPCHMVYQYHVTSDGRLNSLLYQRSADVFLGLPFNLVGAAALQAMLADQAGLALGDLVWTGGDVHIYRNHIDQMKEQLAREPRAFPRLELTRHPNSITDYKIEDFAITGYDPHPPIKGAVAV</sequence>
<accession>Q9Z671</accession>
<accession>Q5NLN1</accession>